<dbReference type="EC" id="2.7.7.6" evidence="1"/>
<dbReference type="EMBL" id="CP000023">
    <property type="protein sequence ID" value="AAV61372.1"/>
    <property type="molecule type" value="Genomic_DNA"/>
</dbReference>
<dbReference type="RefSeq" id="WP_002947111.1">
    <property type="nucleotide sequence ID" value="NC_006448.1"/>
</dbReference>
<dbReference type="SMR" id="Q5M2N4"/>
<dbReference type="STRING" id="264199.stu1773"/>
<dbReference type="KEGG" id="stl:stu1773"/>
<dbReference type="eggNOG" id="COG5503">
    <property type="taxonomic scope" value="Bacteria"/>
</dbReference>
<dbReference type="HOGENOM" id="CLU_187518_0_0_9"/>
<dbReference type="Proteomes" id="UP000001170">
    <property type="component" value="Chromosome"/>
</dbReference>
<dbReference type="GO" id="GO:0000428">
    <property type="term" value="C:DNA-directed RNA polymerase complex"/>
    <property type="evidence" value="ECO:0007669"/>
    <property type="project" value="UniProtKB-KW"/>
</dbReference>
<dbReference type="GO" id="GO:0003677">
    <property type="term" value="F:DNA binding"/>
    <property type="evidence" value="ECO:0007669"/>
    <property type="project" value="UniProtKB-UniRule"/>
</dbReference>
<dbReference type="GO" id="GO:0003899">
    <property type="term" value="F:DNA-directed RNA polymerase activity"/>
    <property type="evidence" value="ECO:0007669"/>
    <property type="project" value="UniProtKB-UniRule"/>
</dbReference>
<dbReference type="GO" id="GO:0006351">
    <property type="term" value="P:DNA-templated transcription"/>
    <property type="evidence" value="ECO:0007669"/>
    <property type="project" value="UniProtKB-UniRule"/>
</dbReference>
<dbReference type="Gene3D" id="3.10.20.730">
    <property type="entry name" value="RNAP, epsilon subunit-like"/>
    <property type="match status" value="1"/>
</dbReference>
<dbReference type="HAMAP" id="MF_01553">
    <property type="entry name" value="RNApol_bact_RpoY"/>
    <property type="match status" value="1"/>
</dbReference>
<dbReference type="InterPro" id="IPR009907">
    <property type="entry name" value="RpoY"/>
</dbReference>
<dbReference type="NCBIfam" id="NF010188">
    <property type="entry name" value="PRK13667.1"/>
    <property type="match status" value="1"/>
</dbReference>
<dbReference type="Pfam" id="PF07288">
    <property type="entry name" value="RpoY"/>
    <property type="match status" value="1"/>
</dbReference>
<gene>
    <name evidence="1" type="primary">rpoY</name>
    <name type="ordered locus">stu1773</name>
</gene>
<reference key="1">
    <citation type="journal article" date="2004" name="Nat. Biotechnol.">
        <title>Complete sequence and comparative genome analysis of the dairy bacterium Streptococcus thermophilus.</title>
        <authorList>
            <person name="Bolotin A."/>
            <person name="Quinquis B."/>
            <person name="Renault P."/>
            <person name="Sorokin A."/>
            <person name="Ehrlich S.D."/>
            <person name="Kulakauskas S."/>
            <person name="Lapidus A."/>
            <person name="Goltsman E."/>
            <person name="Mazur M."/>
            <person name="Pusch G.D."/>
            <person name="Fonstein M."/>
            <person name="Overbeek R."/>
            <person name="Kyprides N."/>
            <person name="Purnelle B."/>
            <person name="Prozzi D."/>
            <person name="Ngui K."/>
            <person name="Masuy D."/>
            <person name="Hancy F."/>
            <person name="Burteau S."/>
            <person name="Boutry M."/>
            <person name="Delcour J."/>
            <person name="Goffeau A."/>
            <person name="Hols P."/>
        </authorList>
    </citation>
    <scope>NUCLEOTIDE SEQUENCE [LARGE SCALE GENOMIC DNA]</scope>
    <source>
        <strain>ATCC BAA-250 / LMG 18311</strain>
    </source>
</reference>
<organism>
    <name type="scientific">Streptococcus thermophilus (strain ATCC BAA-250 / LMG 18311)</name>
    <dbReference type="NCBI Taxonomy" id="264199"/>
    <lineage>
        <taxon>Bacteria</taxon>
        <taxon>Bacillati</taxon>
        <taxon>Bacillota</taxon>
        <taxon>Bacilli</taxon>
        <taxon>Lactobacillales</taxon>
        <taxon>Streptococcaceae</taxon>
        <taxon>Streptococcus</taxon>
    </lineage>
</organism>
<keyword id="KW-0240">DNA-directed RNA polymerase</keyword>
<keyword id="KW-0548">Nucleotidyltransferase</keyword>
<keyword id="KW-1185">Reference proteome</keyword>
<keyword id="KW-0804">Transcription</keyword>
<keyword id="KW-0808">Transferase</keyword>
<sequence length="76" mass="9143">MIYKVFYQETKERSPRREQTKSLYLDIDAETELEGRIQARQIIEKNTAYNIEFIELLSEKALEYEKETGVFEVTEF</sequence>
<proteinExistence type="inferred from homology"/>
<accession>Q5M2N4</accession>
<name>RPOY_STRT2</name>
<evidence type="ECO:0000255" key="1">
    <source>
        <dbReference type="HAMAP-Rule" id="MF_01553"/>
    </source>
</evidence>
<feature type="chain" id="PRO_0000163154" description="DNA-directed RNA polymerase subunit epsilon">
    <location>
        <begin position="1"/>
        <end position="76"/>
    </location>
</feature>
<protein>
    <recommendedName>
        <fullName evidence="1">DNA-directed RNA polymerase subunit epsilon</fullName>
        <shortName evidence="1">RNAP epsilon subunit</shortName>
        <ecNumber evidence="1">2.7.7.6</ecNumber>
    </recommendedName>
    <alternativeName>
        <fullName evidence="1">RNA polymerase epsilon subunit</fullName>
    </alternativeName>
    <alternativeName>
        <fullName evidence="1">Transcriptase subunit epsilon</fullName>
    </alternativeName>
</protein>
<comment type="function">
    <text evidence="1">A non-essential component of RNA polymerase (RNAP).</text>
</comment>
<comment type="catalytic activity">
    <reaction evidence="1">
        <text>RNA(n) + a ribonucleoside 5'-triphosphate = RNA(n+1) + diphosphate</text>
        <dbReference type="Rhea" id="RHEA:21248"/>
        <dbReference type="Rhea" id="RHEA-COMP:14527"/>
        <dbReference type="Rhea" id="RHEA-COMP:17342"/>
        <dbReference type="ChEBI" id="CHEBI:33019"/>
        <dbReference type="ChEBI" id="CHEBI:61557"/>
        <dbReference type="ChEBI" id="CHEBI:140395"/>
        <dbReference type="EC" id="2.7.7.6"/>
    </reaction>
</comment>
<comment type="subunit">
    <text evidence="1">RNAP is composed of a core of 2 alpha, a beta and a beta' subunit. The core is associated with a delta subunit, and at least one of epsilon or omega. When a sigma factor is associated with the core the holoenzyme is formed, which can initiate transcription.</text>
</comment>
<comment type="similarity">
    <text evidence="1">Belongs to the RNA polymerase subunit epsilon family.</text>
</comment>